<dbReference type="EMBL" id="AY676494">
    <property type="protein sequence ID" value="AAT78423.1"/>
    <property type="molecule type" value="mRNA"/>
</dbReference>
<dbReference type="EMBL" id="AY358178">
    <property type="protein sequence ID" value="AAQ88545.1"/>
    <property type="molecule type" value="mRNA"/>
</dbReference>
<dbReference type="EMBL" id="AK024551">
    <property type="protein sequence ID" value="BAB14926.1"/>
    <property type="status" value="ALT_FRAME"/>
    <property type="molecule type" value="mRNA"/>
</dbReference>
<dbReference type="EMBL" id="AE006467">
    <property type="protein sequence ID" value="AAK61286.1"/>
    <property type="molecule type" value="Genomic_DNA"/>
</dbReference>
<dbReference type="EMBL" id="CH471112">
    <property type="protein sequence ID" value="EAW85645.1"/>
    <property type="molecule type" value="Genomic_DNA"/>
</dbReference>
<dbReference type="EMBL" id="CH471112">
    <property type="protein sequence ID" value="EAW85646.1"/>
    <property type="molecule type" value="Genomic_DNA"/>
</dbReference>
<dbReference type="EMBL" id="BC004932">
    <property type="protein sequence ID" value="AAH04932.1"/>
    <property type="molecule type" value="mRNA"/>
</dbReference>
<dbReference type="EMBL" id="BC105785">
    <property type="protein sequence ID" value="AAI05786.1"/>
    <property type="molecule type" value="mRNA"/>
</dbReference>
<dbReference type="CCDS" id="CCDS42098.1"/>
<dbReference type="RefSeq" id="NP_001243470.1">
    <property type="nucleotide sequence ID" value="NM_001256541.2"/>
</dbReference>
<dbReference type="RefSeq" id="NP_078876.2">
    <property type="nucleotide sequence ID" value="NM_024600.6"/>
</dbReference>
<dbReference type="BioGRID" id="122780">
    <property type="interactions" value="14"/>
</dbReference>
<dbReference type="FunCoup" id="Q9BSN7">
    <property type="interactions" value="539"/>
</dbReference>
<dbReference type="IntAct" id="Q9BSN7">
    <property type="interactions" value="8"/>
</dbReference>
<dbReference type="STRING" id="9606.ENSP00000454945"/>
<dbReference type="TCDB" id="8.A.130.1.1">
    <property type="family name" value="the transmembrane protein 204 (tmem204) family"/>
</dbReference>
<dbReference type="GlyCosmos" id="Q9BSN7">
    <property type="glycosylation" value="1 site, No reported glycans"/>
</dbReference>
<dbReference type="GlyGen" id="Q9BSN7">
    <property type="glycosylation" value="1 site, 1 N-linked glycan (1 site)"/>
</dbReference>
<dbReference type="iPTMnet" id="Q9BSN7"/>
<dbReference type="PhosphoSitePlus" id="Q9BSN7"/>
<dbReference type="BioMuta" id="TMEM204"/>
<dbReference type="DMDM" id="73917798"/>
<dbReference type="MassIVE" id="Q9BSN7"/>
<dbReference type="PaxDb" id="9606-ENSP00000454945"/>
<dbReference type="PeptideAtlas" id="Q9BSN7"/>
<dbReference type="ProteomicsDB" id="78917"/>
<dbReference type="Antibodypedia" id="2862">
    <property type="antibodies" value="77 antibodies from 21 providers"/>
</dbReference>
<dbReference type="DNASU" id="79652"/>
<dbReference type="Ensembl" id="ENST00000253934.9">
    <property type="protein sequence ID" value="ENSP00000253934.5"/>
    <property type="gene ID" value="ENSG00000131634.14"/>
</dbReference>
<dbReference type="Ensembl" id="ENST00000566264.2">
    <property type="protein sequence ID" value="ENSP00000454945.1"/>
    <property type="gene ID" value="ENSG00000131634.14"/>
</dbReference>
<dbReference type="GeneID" id="79652"/>
<dbReference type="KEGG" id="hsa:79652"/>
<dbReference type="MANE-Select" id="ENST00000566264.2">
    <property type="protein sequence ID" value="ENSP00000454945.1"/>
    <property type="RefSeq nucleotide sequence ID" value="NM_024600.6"/>
    <property type="RefSeq protein sequence ID" value="NP_078876.2"/>
</dbReference>
<dbReference type="UCSC" id="uc002cmc.4">
    <property type="organism name" value="human"/>
</dbReference>
<dbReference type="AGR" id="HGNC:14158"/>
<dbReference type="CTD" id="79652"/>
<dbReference type="DisGeNET" id="79652"/>
<dbReference type="GeneCards" id="TMEM204"/>
<dbReference type="HGNC" id="HGNC:14158">
    <property type="gene designation" value="TMEM204"/>
</dbReference>
<dbReference type="HPA" id="ENSG00000131634">
    <property type="expression patterns" value="Low tissue specificity"/>
</dbReference>
<dbReference type="MIM" id="611002">
    <property type="type" value="gene"/>
</dbReference>
<dbReference type="neXtProt" id="NX_Q9BSN7"/>
<dbReference type="OpenTargets" id="ENSG00000131634"/>
<dbReference type="PharmGKB" id="PA162406384"/>
<dbReference type="VEuPathDB" id="HostDB:ENSG00000131634"/>
<dbReference type="eggNOG" id="ENOG502QTQQ">
    <property type="taxonomic scope" value="Eukaryota"/>
</dbReference>
<dbReference type="GeneTree" id="ENSGT00390000015528"/>
<dbReference type="HOGENOM" id="CLU_107201_0_0_1"/>
<dbReference type="InParanoid" id="Q9BSN7"/>
<dbReference type="OMA" id="WKSCWLA"/>
<dbReference type="OrthoDB" id="9928383at2759"/>
<dbReference type="PAN-GO" id="Q9BSN7">
    <property type="GO annotations" value="4 GO annotations based on evolutionary models"/>
</dbReference>
<dbReference type="PhylomeDB" id="Q9BSN7"/>
<dbReference type="TreeFam" id="TF331492"/>
<dbReference type="PathwayCommons" id="Q9BSN7"/>
<dbReference type="BioGRID-ORCS" id="79652">
    <property type="hits" value="23 hits in 1150 CRISPR screens"/>
</dbReference>
<dbReference type="ChiTaRS" id="TMEM204">
    <property type="organism name" value="human"/>
</dbReference>
<dbReference type="GenomeRNAi" id="79652"/>
<dbReference type="Pharos" id="Q9BSN7">
    <property type="development level" value="Tbio"/>
</dbReference>
<dbReference type="PRO" id="PR:Q9BSN7"/>
<dbReference type="Proteomes" id="UP000005640">
    <property type="component" value="Chromosome 16"/>
</dbReference>
<dbReference type="RNAct" id="Q9BSN7">
    <property type="molecule type" value="protein"/>
</dbReference>
<dbReference type="Bgee" id="ENSG00000131634">
    <property type="expression patterns" value="Expressed in right lung and 184 other cell types or tissues"/>
</dbReference>
<dbReference type="GO" id="GO:0005912">
    <property type="term" value="C:adherens junction"/>
    <property type="evidence" value="ECO:0007669"/>
    <property type="project" value="UniProtKB-SubCell"/>
</dbReference>
<dbReference type="GO" id="GO:0005886">
    <property type="term" value="C:plasma membrane"/>
    <property type="evidence" value="ECO:0000318"/>
    <property type="project" value="GO_Central"/>
</dbReference>
<dbReference type="GO" id="GO:0001945">
    <property type="term" value="P:lymph vessel development"/>
    <property type="evidence" value="ECO:0000318"/>
    <property type="project" value="GO_Central"/>
</dbReference>
<dbReference type="GO" id="GO:0030947">
    <property type="term" value="P:regulation of vascular endothelial growth factor receptor signaling pathway"/>
    <property type="evidence" value="ECO:0000318"/>
    <property type="project" value="GO_Central"/>
</dbReference>
<dbReference type="GO" id="GO:0051145">
    <property type="term" value="P:smooth muscle cell differentiation"/>
    <property type="evidence" value="ECO:0000318"/>
    <property type="project" value="GO_Central"/>
</dbReference>
<dbReference type="FunFam" id="1.20.140.150:FF:000008">
    <property type="entry name" value="Transmembrane protein 204"/>
    <property type="match status" value="1"/>
</dbReference>
<dbReference type="Gene3D" id="1.20.140.150">
    <property type="match status" value="1"/>
</dbReference>
<dbReference type="InterPro" id="IPR038992">
    <property type="entry name" value="TMEM204"/>
</dbReference>
<dbReference type="PANTHER" id="PTHR14627">
    <property type="entry name" value="TRANSMEMBRANE PROTEIN 204"/>
    <property type="match status" value="1"/>
</dbReference>
<dbReference type="PANTHER" id="PTHR14627:SF0">
    <property type="entry name" value="TRANSMEMBRANE PROTEIN 204"/>
    <property type="match status" value="1"/>
</dbReference>
<accession>Q9BSN7</accession>
<accession>D3DU76</accession>
<accession>Q3KRC1</accession>
<accession>Q9H7G5</accession>
<feature type="chain" id="PRO_0000089865" description="Transmembrane protein 204">
    <location>
        <begin position="1"/>
        <end position="226"/>
    </location>
</feature>
<feature type="topological domain" description="Cytoplasmic" evidence="1">
    <location>
        <begin position="1"/>
        <end position="5"/>
    </location>
</feature>
<feature type="transmembrane region" description="Helical" evidence="1">
    <location>
        <begin position="6"/>
        <end position="26"/>
    </location>
</feature>
<feature type="topological domain" description="Extracellular" evidence="1">
    <location>
        <begin position="27"/>
        <end position="103"/>
    </location>
</feature>
<feature type="transmembrane region" description="Helical" evidence="1">
    <location>
        <begin position="104"/>
        <end position="124"/>
    </location>
</feature>
<feature type="topological domain" description="Cytoplasmic" evidence="1">
    <location>
        <begin position="125"/>
        <end position="136"/>
    </location>
</feature>
<feature type="transmembrane region" description="Helical" evidence="1">
    <location>
        <begin position="137"/>
        <end position="157"/>
    </location>
</feature>
<feature type="topological domain" description="Extracellular" evidence="1">
    <location>
        <begin position="158"/>
        <end position="170"/>
    </location>
</feature>
<feature type="transmembrane region" description="Helical" evidence="1">
    <location>
        <begin position="171"/>
        <end position="191"/>
    </location>
</feature>
<feature type="topological domain" description="Cytoplasmic" evidence="1">
    <location>
        <begin position="192"/>
        <end position="226"/>
    </location>
</feature>
<feature type="glycosylation site" description="N-linked (GlcNAc...) asparagine" evidence="1">
    <location>
        <position position="164"/>
    </location>
</feature>
<feature type="sequence variant" id="VAR_051435" description="In dbSNP:rs1057612.">
    <original>G</original>
    <variation>A</variation>
    <location>
        <position position="57"/>
    </location>
</feature>
<gene>
    <name type="primary">TMEM204</name>
    <name type="synonym">C16orf30</name>
    <name type="synonym">CLP24</name>
    <name type="ORF">UNQ6509/PRO21434</name>
</gene>
<name>TM204_HUMAN</name>
<evidence type="ECO:0000255" key="1"/>
<evidence type="ECO:0000269" key="2">
    <source>
    </source>
</evidence>
<evidence type="ECO:0000305" key="3"/>
<keyword id="KW-0965">Cell junction</keyword>
<keyword id="KW-1003">Cell membrane</keyword>
<keyword id="KW-0325">Glycoprotein</keyword>
<keyword id="KW-0472">Membrane</keyword>
<keyword id="KW-1267">Proteomics identification</keyword>
<keyword id="KW-1185">Reference proteome</keyword>
<keyword id="KW-0346">Stress response</keyword>
<keyword id="KW-0812">Transmembrane</keyword>
<keyword id="KW-1133">Transmembrane helix</keyword>
<comment type="function">
    <text>Can influence paracellular permeability. Appears to be involved in cell-cell interactions through adherens.</text>
</comment>
<comment type="subcellular location">
    <subcellularLocation>
        <location evidence="2">Cell junction</location>
        <location evidence="2">Adherens junction</location>
    </subcellularLocation>
    <subcellularLocation>
        <location evidence="2">Cell membrane</location>
        <topology evidence="2">Multi-pass membrane protein</topology>
    </subcellularLocation>
    <text>Colocalizes with the beta-catenin adherins.</text>
</comment>
<comment type="tissue specificity">
    <text evidence="2">Highly expressed in lung, heart, kidney and placenta. Lower expression in thymus, spleen, liver, testis and ovary. Expressed in endothelial and restricted epithelial cell populations.</text>
</comment>
<comment type="induction">
    <text>By hypoxia.</text>
</comment>
<comment type="sequence caution" evidence="3">
    <conflict type="frameshift">
        <sequence resource="EMBL-CDS" id="BAB14926"/>
    </conflict>
</comment>
<organism>
    <name type="scientific">Homo sapiens</name>
    <name type="common">Human</name>
    <dbReference type="NCBI Taxonomy" id="9606"/>
    <lineage>
        <taxon>Eukaryota</taxon>
        <taxon>Metazoa</taxon>
        <taxon>Chordata</taxon>
        <taxon>Craniata</taxon>
        <taxon>Vertebrata</taxon>
        <taxon>Euteleostomi</taxon>
        <taxon>Mammalia</taxon>
        <taxon>Eutheria</taxon>
        <taxon>Euarchontoglires</taxon>
        <taxon>Primates</taxon>
        <taxon>Haplorrhini</taxon>
        <taxon>Catarrhini</taxon>
        <taxon>Hominidae</taxon>
        <taxon>Homo</taxon>
    </lineage>
</organism>
<reference key="1">
    <citation type="journal article" date="2004" name="Eur. J. Biochem.">
        <title>A novel four transmembrane spanning protein, CLP24.</title>
        <authorList>
            <person name="Kearsey J."/>
            <person name="Petit S."/>
            <person name="De Oliveira C."/>
            <person name="Schweighoffer F."/>
        </authorList>
    </citation>
    <scope>NUCLEOTIDE SEQUENCE [MRNA]</scope>
    <scope>POSSIBLE FUNCTION</scope>
    <scope>SUBCELLULAR LOCATION</scope>
    <scope>TISSUE SPECIFICITY</scope>
    <source>
        <tissue>Endothelial cell</tissue>
    </source>
</reference>
<reference key="2">
    <citation type="journal article" date="2003" name="Genome Res.">
        <title>The secreted protein discovery initiative (SPDI), a large-scale effort to identify novel human secreted and transmembrane proteins: a bioinformatics assessment.</title>
        <authorList>
            <person name="Clark H.F."/>
            <person name="Gurney A.L."/>
            <person name="Abaya E."/>
            <person name="Baker K."/>
            <person name="Baldwin D.T."/>
            <person name="Brush J."/>
            <person name="Chen J."/>
            <person name="Chow B."/>
            <person name="Chui C."/>
            <person name="Crowley C."/>
            <person name="Currell B."/>
            <person name="Deuel B."/>
            <person name="Dowd P."/>
            <person name="Eaton D."/>
            <person name="Foster J.S."/>
            <person name="Grimaldi C."/>
            <person name="Gu Q."/>
            <person name="Hass P.E."/>
            <person name="Heldens S."/>
            <person name="Huang A."/>
            <person name="Kim H.S."/>
            <person name="Klimowski L."/>
            <person name="Jin Y."/>
            <person name="Johnson S."/>
            <person name="Lee J."/>
            <person name="Lewis L."/>
            <person name="Liao D."/>
            <person name="Mark M.R."/>
            <person name="Robbie E."/>
            <person name="Sanchez C."/>
            <person name="Schoenfeld J."/>
            <person name="Seshagiri S."/>
            <person name="Simmons L."/>
            <person name="Singh J."/>
            <person name="Smith V."/>
            <person name="Stinson J."/>
            <person name="Vagts A."/>
            <person name="Vandlen R.L."/>
            <person name="Watanabe C."/>
            <person name="Wieand D."/>
            <person name="Woods K."/>
            <person name="Xie M.-H."/>
            <person name="Yansura D.G."/>
            <person name="Yi S."/>
            <person name="Yu G."/>
            <person name="Yuan J."/>
            <person name="Zhang M."/>
            <person name="Zhang Z."/>
            <person name="Goddard A.D."/>
            <person name="Wood W.I."/>
            <person name="Godowski P.J."/>
            <person name="Gray A.M."/>
        </authorList>
    </citation>
    <scope>NUCLEOTIDE SEQUENCE [LARGE SCALE MRNA]</scope>
</reference>
<reference key="3">
    <citation type="journal article" date="2004" name="Nat. Genet.">
        <title>Complete sequencing and characterization of 21,243 full-length human cDNAs.</title>
        <authorList>
            <person name="Ota T."/>
            <person name="Suzuki Y."/>
            <person name="Nishikawa T."/>
            <person name="Otsuki T."/>
            <person name="Sugiyama T."/>
            <person name="Irie R."/>
            <person name="Wakamatsu A."/>
            <person name="Hayashi K."/>
            <person name="Sato H."/>
            <person name="Nagai K."/>
            <person name="Kimura K."/>
            <person name="Makita H."/>
            <person name="Sekine M."/>
            <person name="Obayashi M."/>
            <person name="Nishi T."/>
            <person name="Shibahara T."/>
            <person name="Tanaka T."/>
            <person name="Ishii S."/>
            <person name="Yamamoto J."/>
            <person name="Saito K."/>
            <person name="Kawai Y."/>
            <person name="Isono Y."/>
            <person name="Nakamura Y."/>
            <person name="Nagahari K."/>
            <person name="Murakami K."/>
            <person name="Yasuda T."/>
            <person name="Iwayanagi T."/>
            <person name="Wagatsuma M."/>
            <person name="Shiratori A."/>
            <person name="Sudo H."/>
            <person name="Hosoiri T."/>
            <person name="Kaku Y."/>
            <person name="Kodaira H."/>
            <person name="Kondo H."/>
            <person name="Sugawara M."/>
            <person name="Takahashi M."/>
            <person name="Kanda K."/>
            <person name="Yokoi T."/>
            <person name="Furuya T."/>
            <person name="Kikkawa E."/>
            <person name="Omura Y."/>
            <person name="Abe K."/>
            <person name="Kamihara K."/>
            <person name="Katsuta N."/>
            <person name="Sato K."/>
            <person name="Tanikawa M."/>
            <person name="Yamazaki M."/>
            <person name="Ninomiya K."/>
            <person name="Ishibashi T."/>
            <person name="Yamashita H."/>
            <person name="Murakawa K."/>
            <person name="Fujimori K."/>
            <person name="Tanai H."/>
            <person name="Kimata M."/>
            <person name="Watanabe M."/>
            <person name="Hiraoka S."/>
            <person name="Chiba Y."/>
            <person name="Ishida S."/>
            <person name="Ono Y."/>
            <person name="Takiguchi S."/>
            <person name="Watanabe S."/>
            <person name="Yosida M."/>
            <person name="Hotuta T."/>
            <person name="Kusano J."/>
            <person name="Kanehori K."/>
            <person name="Takahashi-Fujii A."/>
            <person name="Hara H."/>
            <person name="Tanase T.-O."/>
            <person name="Nomura Y."/>
            <person name="Togiya S."/>
            <person name="Komai F."/>
            <person name="Hara R."/>
            <person name="Takeuchi K."/>
            <person name="Arita M."/>
            <person name="Imose N."/>
            <person name="Musashino K."/>
            <person name="Yuuki H."/>
            <person name="Oshima A."/>
            <person name="Sasaki N."/>
            <person name="Aotsuka S."/>
            <person name="Yoshikawa Y."/>
            <person name="Matsunawa H."/>
            <person name="Ichihara T."/>
            <person name="Shiohata N."/>
            <person name="Sano S."/>
            <person name="Moriya S."/>
            <person name="Momiyama H."/>
            <person name="Satoh N."/>
            <person name="Takami S."/>
            <person name="Terashima Y."/>
            <person name="Suzuki O."/>
            <person name="Nakagawa S."/>
            <person name="Senoh A."/>
            <person name="Mizoguchi H."/>
            <person name="Goto Y."/>
            <person name="Shimizu F."/>
            <person name="Wakebe H."/>
            <person name="Hishigaki H."/>
            <person name="Watanabe T."/>
            <person name="Sugiyama A."/>
            <person name="Takemoto M."/>
            <person name="Kawakami B."/>
            <person name="Yamazaki M."/>
            <person name="Watanabe K."/>
            <person name="Kumagai A."/>
            <person name="Itakura S."/>
            <person name="Fukuzumi Y."/>
            <person name="Fujimori Y."/>
            <person name="Komiyama M."/>
            <person name="Tashiro H."/>
            <person name="Tanigami A."/>
            <person name="Fujiwara T."/>
            <person name="Ono T."/>
            <person name="Yamada K."/>
            <person name="Fujii Y."/>
            <person name="Ozaki K."/>
            <person name="Hirao M."/>
            <person name="Ohmori Y."/>
            <person name="Kawabata A."/>
            <person name="Hikiji T."/>
            <person name="Kobatake N."/>
            <person name="Inagaki H."/>
            <person name="Ikema Y."/>
            <person name="Okamoto S."/>
            <person name="Okitani R."/>
            <person name="Kawakami T."/>
            <person name="Noguchi S."/>
            <person name="Itoh T."/>
            <person name="Shigeta K."/>
            <person name="Senba T."/>
            <person name="Matsumura K."/>
            <person name="Nakajima Y."/>
            <person name="Mizuno T."/>
            <person name="Morinaga M."/>
            <person name="Sasaki M."/>
            <person name="Togashi T."/>
            <person name="Oyama M."/>
            <person name="Hata H."/>
            <person name="Watanabe M."/>
            <person name="Komatsu T."/>
            <person name="Mizushima-Sugano J."/>
            <person name="Satoh T."/>
            <person name="Shirai Y."/>
            <person name="Takahashi Y."/>
            <person name="Nakagawa K."/>
            <person name="Okumura K."/>
            <person name="Nagase T."/>
            <person name="Nomura N."/>
            <person name="Kikuchi H."/>
            <person name="Masuho Y."/>
            <person name="Yamashita R."/>
            <person name="Nakai K."/>
            <person name="Yada T."/>
            <person name="Nakamura Y."/>
            <person name="Ohara O."/>
            <person name="Isogai T."/>
            <person name="Sugano S."/>
        </authorList>
    </citation>
    <scope>NUCLEOTIDE SEQUENCE [LARGE SCALE MRNA]</scope>
    <source>
        <tissue>Adipose tissue</tissue>
    </source>
</reference>
<reference key="4">
    <citation type="journal article" date="2001" name="Hum. Mol. Genet.">
        <title>Sequence, structure and pathology of the fully annotated terminal 2 Mb of the short arm of human chromosome 16.</title>
        <authorList>
            <person name="Daniels R.J."/>
            <person name="Peden J.F."/>
            <person name="Lloyd C."/>
            <person name="Horsley S.W."/>
            <person name="Clark K."/>
            <person name="Tufarelli C."/>
            <person name="Kearney L."/>
            <person name="Buckle V.J."/>
            <person name="Doggett N.A."/>
            <person name="Flint J."/>
            <person name="Higgs D.R."/>
        </authorList>
    </citation>
    <scope>NUCLEOTIDE SEQUENCE [LARGE SCALE GENOMIC DNA]</scope>
</reference>
<reference key="5">
    <citation type="submission" date="2005-09" db="EMBL/GenBank/DDBJ databases">
        <authorList>
            <person name="Mural R.J."/>
            <person name="Istrail S."/>
            <person name="Sutton G.G."/>
            <person name="Florea L."/>
            <person name="Halpern A.L."/>
            <person name="Mobarry C.M."/>
            <person name="Lippert R."/>
            <person name="Walenz B."/>
            <person name="Shatkay H."/>
            <person name="Dew I."/>
            <person name="Miller J.R."/>
            <person name="Flanigan M.J."/>
            <person name="Edwards N.J."/>
            <person name="Bolanos R."/>
            <person name="Fasulo D."/>
            <person name="Halldorsson B.V."/>
            <person name="Hannenhalli S."/>
            <person name="Turner R."/>
            <person name="Yooseph S."/>
            <person name="Lu F."/>
            <person name="Nusskern D.R."/>
            <person name="Shue B.C."/>
            <person name="Zheng X.H."/>
            <person name="Zhong F."/>
            <person name="Delcher A.L."/>
            <person name="Huson D.H."/>
            <person name="Kravitz S.A."/>
            <person name="Mouchard L."/>
            <person name="Reinert K."/>
            <person name="Remington K.A."/>
            <person name="Clark A.G."/>
            <person name="Waterman M.S."/>
            <person name="Eichler E.E."/>
            <person name="Adams M.D."/>
            <person name="Hunkapiller M.W."/>
            <person name="Myers E.W."/>
            <person name="Venter J.C."/>
        </authorList>
    </citation>
    <scope>NUCLEOTIDE SEQUENCE [LARGE SCALE GENOMIC DNA]</scope>
</reference>
<reference key="6">
    <citation type="journal article" date="2004" name="Genome Res.">
        <title>The status, quality, and expansion of the NIH full-length cDNA project: the Mammalian Gene Collection (MGC).</title>
        <authorList>
            <consortium name="The MGC Project Team"/>
        </authorList>
    </citation>
    <scope>NUCLEOTIDE SEQUENCE [LARGE SCALE MRNA]</scope>
    <source>
        <tissue>Lung</tissue>
        <tissue>Pancreas</tissue>
    </source>
</reference>
<protein>
    <recommendedName>
        <fullName>Transmembrane protein 204</fullName>
    </recommendedName>
    <alternativeName>
        <fullName>Claudin-like protein 24</fullName>
    </alternativeName>
</protein>
<sequence>MTVQRLVAAAVLVALVSLILNNVAAFTSNWVCQTLEDGRRRSVGLWRSCWLVDRTRGGPSPGARAGQVDAHDCEALGWGSEAAGFQESRGTVKLQFDMMRACNLVATAALTAGQLTFLLGLVGLPLLSPDAPCWEEAMAAAFQLASFVLVIGLVTFYRIGPYTNLSWSCYLNIGACLLATLAAAMLIWNILHKREDCMAPRVIVISRSLTARFRRGLDNDYVESPC</sequence>
<proteinExistence type="evidence at protein level"/>